<reference key="1">
    <citation type="journal article" date="2003" name="Mol. Microbiol.">
        <title>Genome-based analysis of virulence genes in a non-biofilm-forming Staphylococcus epidermidis strain (ATCC 12228).</title>
        <authorList>
            <person name="Zhang Y.-Q."/>
            <person name="Ren S.-X."/>
            <person name="Li H.-L."/>
            <person name="Wang Y.-X."/>
            <person name="Fu G."/>
            <person name="Yang J."/>
            <person name="Qin Z.-Q."/>
            <person name="Miao Y.-G."/>
            <person name="Wang W.-Y."/>
            <person name="Chen R.-S."/>
            <person name="Shen Y."/>
            <person name="Chen Z."/>
            <person name="Yuan Z.-H."/>
            <person name="Zhao G.-P."/>
            <person name="Qu D."/>
            <person name="Danchin A."/>
            <person name="Wen Y.-M."/>
        </authorList>
    </citation>
    <scope>NUCLEOTIDE SEQUENCE [LARGE SCALE GENOMIC DNA]</scope>
    <source>
        <strain>ATCC 12228 / FDA PCI 1200</strain>
    </source>
</reference>
<gene>
    <name type="primary">mnhC1</name>
    <name type="ordered locus">SE_0644</name>
</gene>
<accession>Q8CPV0</accession>
<comment type="function">
    <text evidence="1">Mnh complex is a Na(+)/H(+) antiporter involved in Na(+) excretion.</text>
</comment>
<comment type="subunit">
    <text evidence="1">May form a heterooligomeric complex that consists of seven subunits: mnhA1, mnhB1, mnhC1, mnhD1, mnhE1, mnhF1 and mnhG1.</text>
</comment>
<comment type="subcellular location">
    <subcellularLocation>
        <location evidence="3">Cell membrane</location>
        <topology evidence="3">Multi-pass membrane protein</topology>
    </subcellularLocation>
</comment>
<comment type="similarity">
    <text evidence="3">Belongs to the CPA3 antiporters (TC 2.A.63) subunit C family.</text>
</comment>
<dbReference type="EMBL" id="AE015929">
    <property type="protein sequence ID" value="AAO04241.1"/>
    <property type="molecule type" value="Genomic_DNA"/>
</dbReference>
<dbReference type="RefSeq" id="NP_764199.1">
    <property type="nucleotide sequence ID" value="NC_004461.1"/>
</dbReference>
<dbReference type="RefSeq" id="WP_001831949.1">
    <property type="nucleotide sequence ID" value="NZ_WBME01000044.1"/>
</dbReference>
<dbReference type="SMR" id="Q8CPV0"/>
<dbReference type="GeneID" id="50019209"/>
<dbReference type="KEGG" id="sep:SE_0644"/>
<dbReference type="PATRIC" id="fig|176280.10.peg.617"/>
<dbReference type="eggNOG" id="COG1006">
    <property type="taxonomic scope" value="Bacteria"/>
</dbReference>
<dbReference type="HOGENOM" id="CLU_082058_3_1_9"/>
<dbReference type="OrthoDB" id="9799219at2"/>
<dbReference type="Proteomes" id="UP000001411">
    <property type="component" value="Chromosome"/>
</dbReference>
<dbReference type="GO" id="GO:0005886">
    <property type="term" value="C:plasma membrane"/>
    <property type="evidence" value="ECO:0007669"/>
    <property type="project" value="UniProtKB-SubCell"/>
</dbReference>
<dbReference type="GO" id="GO:0015297">
    <property type="term" value="F:antiporter activity"/>
    <property type="evidence" value="ECO:0007669"/>
    <property type="project" value="UniProtKB-KW"/>
</dbReference>
<dbReference type="GO" id="GO:0008324">
    <property type="term" value="F:monoatomic cation transmembrane transporter activity"/>
    <property type="evidence" value="ECO:0007669"/>
    <property type="project" value="InterPro"/>
</dbReference>
<dbReference type="GO" id="GO:1902600">
    <property type="term" value="P:proton transmembrane transport"/>
    <property type="evidence" value="ECO:0007669"/>
    <property type="project" value="UniProtKB-KW"/>
</dbReference>
<dbReference type="GO" id="GO:0006814">
    <property type="term" value="P:sodium ion transport"/>
    <property type="evidence" value="ECO:0007669"/>
    <property type="project" value="UniProtKB-KW"/>
</dbReference>
<dbReference type="Gene3D" id="1.10.287.3510">
    <property type="match status" value="1"/>
</dbReference>
<dbReference type="InterPro" id="IPR050601">
    <property type="entry name" value="CPA3_antiporter_subunitC"/>
</dbReference>
<dbReference type="InterPro" id="IPR006673">
    <property type="entry name" value="Mnh_C1_su"/>
</dbReference>
<dbReference type="InterPro" id="IPR039428">
    <property type="entry name" value="NUOK/Mnh_C1-like"/>
</dbReference>
<dbReference type="NCBIfam" id="TIGR00941">
    <property type="entry name" value="2a6301s03"/>
    <property type="match status" value="1"/>
</dbReference>
<dbReference type="NCBIfam" id="NF006372">
    <property type="entry name" value="PRK08600.1"/>
    <property type="match status" value="1"/>
</dbReference>
<dbReference type="NCBIfam" id="NF006573">
    <property type="entry name" value="PRK09094.1"/>
    <property type="match status" value="1"/>
</dbReference>
<dbReference type="NCBIfam" id="NF009303">
    <property type="entry name" value="PRK12660.1"/>
    <property type="match status" value="1"/>
</dbReference>
<dbReference type="PANTHER" id="PTHR34583">
    <property type="entry name" value="ANTIPORTER SUBUNIT MNHC2-RELATED"/>
    <property type="match status" value="1"/>
</dbReference>
<dbReference type="PANTHER" id="PTHR34583:SF2">
    <property type="entry name" value="ANTIPORTER SUBUNIT MNHC2-RELATED"/>
    <property type="match status" value="1"/>
</dbReference>
<dbReference type="Pfam" id="PF00420">
    <property type="entry name" value="Oxidored_q2"/>
    <property type="match status" value="1"/>
</dbReference>
<name>MNHC1_STAES</name>
<sequence>MEIIMIFVSGILTSISVYLVLSKSLIRIIMGTTLLTHAANLFLITMGGLKHGTVPIFEKGTSSYVDPIPQALILTAIVIAFATTAFFLVLAFRTYKELGTDNVELMKGAPEDDRE</sequence>
<keyword id="KW-0050">Antiport</keyword>
<keyword id="KW-1003">Cell membrane</keyword>
<keyword id="KW-0375">Hydrogen ion transport</keyword>
<keyword id="KW-0406">Ion transport</keyword>
<keyword id="KW-0472">Membrane</keyword>
<keyword id="KW-0915">Sodium</keyword>
<keyword id="KW-0739">Sodium transport</keyword>
<keyword id="KW-0812">Transmembrane</keyword>
<keyword id="KW-1133">Transmembrane helix</keyword>
<keyword id="KW-0813">Transport</keyword>
<protein>
    <recommendedName>
        <fullName>Na(+)/H(+) antiporter subunit C1</fullName>
    </recommendedName>
    <alternativeName>
        <fullName>Mnh complex subunit C1</fullName>
    </alternativeName>
</protein>
<feature type="chain" id="PRO_0000372125" description="Na(+)/H(+) antiporter subunit C1">
    <location>
        <begin position="1"/>
        <end position="115"/>
    </location>
</feature>
<feature type="transmembrane region" description="Helical" evidence="2">
    <location>
        <begin position="1"/>
        <end position="21"/>
    </location>
</feature>
<feature type="transmembrane region" description="Helical" evidence="2">
    <location>
        <begin position="28"/>
        <end position="48"/>
    </location>
</feature>
<feature type="transmembrane region" description="Helical" evidence="2">
    <location>
        <begin position="72"/>
        <end position="92"/>
    </location>
</feature>
<organism>
    <name type="scientific">Staphylococcus epidermidis (strain ATCC 12228 / FDA PCI 1200)</name>
    <dbReference type="NCBI Taxonomy" id="176280"/>
    <lineage>
        <taxon>Bacteria</taxon>
        <taxon>Bacillati</taxon>
        <taxon>Bacillota</taxon>
        <taxon>Bacilli</taxon>
        <taxon>Bacillales</taxon>
        <taxon>Staphylococcaceae</taxon>
        <taxon>Staphylococcus</taxon>
    </lineage>
</organism>
<evidence type="ECO:0000250" key="1"/>
<evidence type="ECO:0000255" key="2"/>
<evidence type="ECO:0000305" key="3"/>
<proteinExistence type="inferred from homology"/>